<gene>
    <name evidence="1" type="primary">yfeO</name>
    <name type="ordered locus">ECS88_2584</name>
</gene>
<comment type="subcellular location">
    <subcellularLocation>
        <location evidence="1">Cell membrane</location>
        <topology evidence="1">Multi-pass membrane protein</topology>
    </subcellularLocation>
</comment>
<comment type="similarity">
    <text evidence="1">Belongs to the chloride channel (TC 2.A.49) family.</text>
</comment>
<protein>
    <recommendedName>
        <fullName evidence="1">Putative ion-transport protein YfeO</fullName>
    </recommendedName>
</protein>
<proteinExistence type="inferred from homology"/>
<sequence length="418" mass="43664">MLHPRARTMLLLSLPAVAIGIASSLILIMVMKIASVLQNLLWQRLPGTLGIAQDSPLWIIGVLTLTGIAVGLVIRFSQGHAGPDPACEPLIGAPVPPSALPGLIVALILGLAGGVSLGPEHPIMTVNIALAVAIGARLLPRVNRMEWTILASAGTIGALFGTPVAAALIFSQTLNGSNEVPLWDRLFAPLMAAAAGALTTGLFFHPHFSLPIAHYGQMEMTDILSGAIVAAIAIAAGMVAVWCLPRLHAMMHQMKNPVFVLGIGGLILGILGVIGGPVSLFKGLDEMQQMVANQAFSTSDYFLLAVIKLAALVVAAASGFRGGRIFPAVFVGVALGLMLHEHVPAVPAAITVSCAILGIVLVVTRDGWLSLFMAAVVVPNTTLLPLLCIVMLPAWLLLAGKPMMMVNRQKQQPPHDNV</sequence>
<evidence type="ECO:0000255" key="1">
    <source>
        <dbReference type="HAMAP-Rule" id="MF_01115"/>
    </source>
</evidence>
<organism>
    <name type="scientific">Escherichia coli O45:K1 (strain S88 / ExPEC)</name>
    <dbReference type="NCBI Taxonomy" id="585035"/>
    <lineage>
        <taxon>Bacteria</taxon>
        <taxon>Pseudomonadati</taxon>
        <taxon>Pseudomonadota</taxon>
        <taxon>Gammaproteobacteria</taxon>
        <taxon>Enterobacterales</taxon>
        <taxon>Enterobacteriaceae</taxon>
        <taxon>Escherichia</taxon>
    </lineage>
</organism>
<keyword id="KW-1003">Cell membrane</keyword>
<keyword id="KW-0407">Ion channel</keyword>
<keyword id="KW-0406">Ion transport</keyword>
<keyword id="KW-0472">Membrane</keyword>
<keyword id="KW-1185">Reference proteome</keyword>
<keyword id="KW-0812">Transmembrane</keyword>
<keyword id="KW-1133">Transmembrane helix</keyword>
<keyword id="KW-0813">Transport</keyword>
<name>YFEO_ECO45</name>
<feature type="chain" id="PRO_1000137207" description="Putative ion-transport protein YfeO">
    <location>
        <begin position="1"/>
        <end position="418"/>
    </location>
</feature>
<feature type="transmembrane region" description="Helical" evidence="1">
    <location>
        <begin position="10"/>
        <end position="30"/>
    </location>
</feature>
<feature type="transmembrane region" description="Helical" evidence="1">
    <location>
        <begin position="54"/>
        <end position="74"/>
    </location>
</feature>
<feature type="transmembrane region" description="Helical" evidence="1">
    <location>
        <begin position="99"/>
        <end position="119"/>
    </location>
</feature>
<feature type="transmembrane region" description="Helical" evidence="1">
    <location>
        <begin position="120"/>
        <end position="140"/>
    </location>
</feature>
<feature type="transmembrane region" description="Helical" evidence="1">
    <location>
        <begin position="149"/>
        <end position="169"/>
    </location>
</feature>
<feature type="transmembrane region" description="Helical" evidence="1">
    <location>
        <begin position="186"/>
        <end position="206"/>
    </location>
</feature>
<feature type="transmembrane region" description="Helical" evidence="1">
    <location>
        <begin position="223"/>
        <end position="243"/>
    </location>
</feature>
<feature type="transmembrane region" description="Helical" evidence="1">
    <location>
        <begin position="258"/>
        <end position="278"/>
    </location>
</feature>
<feature type="transmembrane region" description="Helical" evidence="1">
    <location>
        <begin position="300"/>
        <end position="320"/>
    </location>
</feature>
<feature type="transmembrane region" description="Helical" evidence="1">
    <location>
        <begin position="322"/>
        <end position="342"/>
    </location>
</feature>
<feature type="transmembrane region" description="Helical" evidence="1">
    <location>
        <begin position="343"/>
        <end position="363"/>
    </location>
</feature>
<feature type="transmembrane region" description="Helical" evidence="1">
    <location>
        <begin position="371"/>
        <end position="391"/>
    </location>
</feature>
<accession>B7MH49</accession>
<dbReference type="EMBL" id="CU928161">
    <property type="protein sequence ID" value="CAR03858.1"/>
    <property type="molecule type" value="Genomic_DNA"/>
</dbReference>
<dbReference type="RefSeq" id="WP_000903099.1">
    <property type="nucleotide sequence ID" value="NC_011742.1"/>
</dbReference>
<dbReference type="SMR" id="B7MH49"/>
<dbReference type="KEGG" id="ecz:ECS88_2584"/>
<dbReference type="HOGENOM" id="CLU_053130_0_0_6"/>
<dbReference type="Proteomes" id="UP000000747">
    <property type="component" value="Chromosome"/>
</dbReference>
<dbReference type="GO" id="GO:0005886">
    <property type="term" value="C:plasma membrane"/>
    <property type="evidence" value="ECO:0007669"/>
    <property type="project" value="UniProtKB-SubCell"/>
</dbReference>
<dbReference type="GO" id="GO:0015108">
    <property type="term" value="F:chloride transmembrane transporter activity"/>
    <property type="evidence" value="ECO:0007669"/>
    <property type="project" value="InterPro"/>
</dbReference>
<dbReference type="GO" id="GO:0005216">
    <property type="term" value="F:monoatomic ion channel activity"/>
    <property type="evidence" value="ECO:0007669"/>
    <property type="project" value="UniProtKB-UniRule"/>
</dbReference>
<dbReference type="CDD" id="cd00400">
    <property type="entry name" value="Voltage_gated_ClC"/>
    <property type="match status" value="1"/>
</dbReference>
<dbReference type="FunFam" id="1.10.3080.10:FF:000007">
    <property type="entry name" value="Putative ion-transport protein YfeO"/>
    <property type="match status" value="1"/>
</dbReference>
<dbReference type="Gene3D" id="1.10.3080.10">
    <property type="entry name" value="Clc chloride channel"/>
    <property type="match status" value="1"/>
</dbReference>
<dbReference type="HAMAP" id="MF_01115">
    <property type="entry name" value="CLC_YfeO"/>
    <property type="match status" value="1"/>
</dbReference>
<dbReference type="InterPro" id="IPR022969">
    <property type="entry name" value="Chloride_channel_YfeO"/>
</dbReference>
<dbReference type="InterPro" id="IPR014743">
    <property type="entry name" value="Cl-channel_core"/>
</dbReference>
<dbReference type="InterPro" id="IPR001807">
    <property type="entry name" value="ClC"/>
</dbReference>
<dbReference type="InterPro" id="IPR050368">
    <property type="entry name" value="ClC-type_chloride_channel"/>
</dbReference>
<dbReference type="NCBIfam" id="NF002971">
    <property type="entry name" value="PRK03655.1"/>
    <property type="match status" value="1"/>
</dbReference>
<dbReference type="PANTHER" id="PTHR43427">
    <property type="entry name" value="CHLORIDE CHANNEL PROTEIN CLC-E"/>
    <property type="match status" value="1"/>
</dbReference>
<dbReference type="PANTHER" id="PTHR43427:SF9">
    <property type="entry name" value="ION-TRANSPORT PROTEIN YFEO-RELATED"/>
    <property type="match status" value="1"/>
</dbReference>
<dbReference type="Pfam" id="PF00654">
    <property type="entry name" value="Voltage_CLC"/>
    <property type="match status" value="1"/>
</dbReference>
<dbReference type="PRINTS" id="PR00762">
    <property type="entry name" value="CLCHANNEL"/>
</dbReference>
<dbReference type="SUPFAM" id="SSF81340">
    <property type="entry name" value="Clc chloride channel"/>
    <property type="match status" value="1"/>
</dbReference>
<reference key="1">
    <citation type="journal article" date="2009" name="PLoS Genet.">
        <title>Organised genome dynamics in the Escherichia coli species results in highly diverse adaptive paths.</title>
        <authorList>
            <person name="Touchon M."/>
            <person name="Hoede C."/>
            <person name="Tenaillon O."/>
            <person name="Barbe V."/>
            <person name="Baeriswyl S."/>
            <person name="Bidet P."/>
            <person name="Bingen E."/>
            <person name="Bonacorsi S."/>
            <person name="Bouchier C."/>
            <person name="Bouvet O."/>
            <person name="Calteau A."/>
            <person name="Chiapello H."/>
            <person name="Clermont O."/>
            <person name="Cruveiller S."/>
            <person name="Danchin A."/>
            <person name="Diard M."/>
            <person name="Dossat C."/>
            <person name="Karoui M.E."/>
            <person name="Frapy E."/>
            <person name="Garry L."/>
            <person name="Ghigo J.M."/>
            <person name="Gilles A.M."/>
            <person name="Johnson J."/>
            <person name="Le Bouguenec C."/>
            <person name="Lescat M."/>
            <person name="Mangenot S."/>
            <person name="Martinez-Jehanne V."/>
            <person name="Matic I."/>
            <person name="Nassif X."/>
            <person name="Oztas S."/>
            <person name="Petit M.A."/>
            <person name="Pichon C."/>
            <person name="Rouy Z."/>
            <person name="Ruf C.S."/>
            <person name="Schneider D."/>
            <person name="Tourret J."/>
            <person name="Vacherie B."/>
            <person name="Vallenet D."/>
            <person name="Medigue C."/>
            <person name="Rocha E.P.C."/>
            <person name="Denamur E."/>
        </authorList>
    </citation>
    <scope>NUCLEOTIDE SEQUENCE [LARGE SCALE GENOMIC DNA]</scope>
    <source>
        <strain>S88 / ExPEC</strain>
    </source>
</reference>